<keyword id="KW-1185">Reference proteome</keyword>
<keyword id="KW-0687">Ribonucleoprotein</keyword>
<keyword id="KW-0689">Ribosomal protein</keyword>
<keyword id="KW-0694">RNA-binding</keyword>
<keyword id="KW-0699">rRNA-binding</keyword>
<evidence type="ECO:0000255" key="1">
    <source>
        <dbReference type="HAMAP-Rule" id="MF_01307"/>
    </source>
</evidence>
<evidence type="ECO:0000305" key="2"/>
<gene>
    <name evidence="1" type="primary">rpsE</name>
    <name type="ordered locus">Suden_0303</name>
</gene>
<proteinExistence type="inferred from homology"/>
<feature type="chain" id="PRO_0000293202" description="Small ribosomal subunit protein uS5">
    <location>
        <begin position="1"/>
        <end position="146"/>
    </location>
</feature>
<feature type="domain" description="S5 DRBM" evidence="1">
    <location>
        <begin position="8"/>
        <end position="71"/>
    </location>
</feature>
<name>RS5_SULDN</name>
<comment type="function">
    <text evidence="1">With S4 and S12 plays an important role in translational accuracy.</text>
</comment>
<comment type="function">
    <text evidence="1">Located at the back of the 30S subunit body where it stabilizes the conformation of the head with respect to the body.</text>
</comment>
<comment type="subunit">
    <text evidence="1">Part of the 30S ribosomal subunit. Contacts proteins S4 and S8.</text>
</comment>
<comment type="domain">
    <text>The N-terminal domain interacts with the head of the 30S subunit; the C-terminal domain interacts with the body and contacts protein S4. The interaction surface between S4 and S5 is involved in control of translational fidelity.</text>
</comment>
<comment type="similarity">
    <text evidence="1">Belongs to the universal ribosomal protein uS5 family.</text>
</comment>
<dbReference type="EMBL" id="CP000153">
    <property type="protein sequence ID" value="ABB43584.1"/>
    <property type="molecule type" value="Genomic_DNA"/>
</dbReference>
<dbReference type="RefSeq" id="WP_011371939.1">
    <property type="nucleotide sequence ID" value="NC_007575.1"/>
</dbReference>
<dbReference type="SMR" id="Q30TU7"/>
<dbReference type="STRING" id="326298.Suden_0303"/>
<dbReference type="KEGG" id="tdn:Suden_0303"/>
<dbReference type="eggNOG" id="COG0098">
    <property type="taxonomic scope" value="Bacteria"/>
</dbReference>
<dbReference type="HOGENOM" id="CLU_065898_2_2_7"/>
<dbReference type="OrthoDB" id="9809045at2"/>
<dbReference type="Proteomes" id="UP000002714">
    <property type="component" value="Chromosome"/>
</dbReference>
<dbReference type="GO" id="GO:0015935">
    <property type="term" value="C:small ribosomal subunit"/>
    <property type="evidence" value="ECO:0007669"/>
    <property type="project" value="InterPro"/>
</dbReference>
<dbReference type="GO" id="GO:0019843">
    <property type="term" value="F:rRNA binding"/>
    <property type="evidence" value="ECO:0007669"/>
    <property type="project" value="UniProtKB-UniRule"/>
</dbReference>
<dbReference type="GO" id="GO:0003735">
    <property type="term" value="F:structural constituent of ribosome"/>
    <property type="evidence" value="ECO:0007669"/>
    <property type="project" value="InterPro"/>
</dbReference>
<dbReference type="GO" id="GO:0006412">
    <property type="term" value="P:translation"/>
    <property type="evidence" value="ECO:0007669"/>
    <property type="project" value="UniProtKB-UniRule"/>
</dbReference>
<dbReference type="FunFam" id="3.30.160.20:FF:000001">
    <property type="entry name" value="30S ribosomal protein S5"/>
    <property type="match status" value="1"/>
</dbReference>
<dbReference type="FunFam" id="3.30.230.10:FF:000002">
    <property type="entry name" value="30S ribosomal protein S5"/>
    <property type="match status" value="1"/>
</dbReference>
<dbReference type="Gene3D" id="3.30.160.20">
    <property type="match status" value="1"/>
</dbReference>
<dbReference type="Gene3D" id="3.30.230.10">
    <property type="match status" value="1"/>
</dbReference>
<dbReference type="HAMAP" id="MF_01307_B">
    <property type="entry name" value="Ribosomal_uS5_B"/>
    <property type="match status" value="1"/>
</dbReference>
<dbReference type="InterPro" id="IPR020568">
    <property type="entry name" value="Ribosomal_Su5_D2-typ_SF"/>
</dbReference>
<dbReference type="InterPro" id="IPR000851">
    <property type="entry name" value="Ribosomal_uS5"/>
</dbReference>
<dbReference type="InterPro" id="IPR005712">
    <property type="entry name" value="Ribosomal_uS5_bac-type"/>
</dbReference>
<dbReference type="InterPro" id="IPR005324">
    <property type="entry name" value="Ribosomal_uS5_C"/>
</dbReference>
<dbReference type="InterPro" id="IPR013810">
    <property type="entry name" value="Ribosomal_uS5_N"/>
</dbReference>
<dbReference type="InterPro" id="IPR018192">
    <property type="entry name" value="Ribosomal_uS5_N_CS"/>
</dbReference>
<dbReference type="InterPro" id="IPR014721">
    <property type="entry name" value="Ribsml_uS5_D2-typ_fold_subgr"/>
</dbReference>
<dbReference type="NCBIfam" id="TIGR01021">
    <property type="entry name" value="rpsE_bact"/>
    <property type="match status" value="1"/>
</dbReference>
<dbReference type="PANTHER" id="PTHR48277">
    <property type="entry name" value="MITOCHONDRIAL RIBOSOMAL PROTEIN S5"/>
    <property type="match status" value="1"/>
</dbReference>
<dbReference type="PANTHER" id="PTHR48277:SF1">
    <property type="entry name" value="MITOCHONDRIAL RIBOSOMAL PROTEIN S5"/>
    <property type="match status" value="1"/>
</dbReference>
<dbReference type="Pfam" id="PF00333">
    <property type="entry name" value="Ribosomal_S5"/>
    <property type="match status" value="1"/>
</dbReference>
<dbReference type="Pfam" id="PF03719">
    <property type="entry name" value="Ribosomal_S5_C"/>
    <property type="match status" value="1"/>
</dbReference>
<dbReference type="SUPFAM" id="SSF54768">
    <property type="entry name" value="dsRNA-binding domain-like"/>
    <property type="match status" value="1"/>
</dbReference>
<dbReference type="SUPFAM" id="SSF54211">
    <property type="entry name" value="Ribosomal protein S5 domain 2-like"/>
    <property type="match status" value="1"/>
</dbReference>
<dbReference type="PROSITE" id="PS00585">
    <property type="entry name" value="RIBOSOMAL_S5"/>
    <property type="match status" value="1"/>
</dbReference>
<dbReference type="PROSITE" id="PS50881">
    <property type="entry name" value="S5_DSRBD"/>
    <property type="match status" value="1"/>
</dbReference>
<protein>
    <recommendedName>
        <fullName evidence="1">Small ribosomal subunit protein uS5</fullName>
    </recommendedName>
    <alternativeName>
        <fullName evidence="2">30S ribosomal protein S5</fullName>
    </alternativeName>
</protein>
<accession>Q30TU7</accession>
<organism>
    <name type="scientific">Sulfurimonas denitrificans (strain ATCC 33889 / DSM 1251)</name>
    <name type="common">Thiomicrospira denitrificans (strain ATCC 33889 / DSM 1251)</name>
    <dbReference type="NCBI Taxonomy" id="326298"/>
    <lineage>
        <taxon>Bacteria</taxon>
        <taxon>Pseudomonadati</taxon>
        <taxon>Campylobacterota</taxon>
        <taxon>Epsilonproteobacteria</taxon>
        <taxon>Campylobacterales</taxon>
        <taxon>Sulfurimonadaceae</taxon>
        <taxon>Sulfurimonas</taxon>
    </lineage>
</organism>
<reference key="1">
    <citation type="journal article" date="2008" name="Appl. Environ. Microbiol.">
        <title>Genome of the epsilonproteobacterial chemolithoautotroph Sulfurimonas denitrificans.</title>
        <authorList>
            <person name="Sievert S.M."/>
            <person name="Scott K.M."/>
            <person name="Klotz M.G."/>
            <person name="Chain P.S.G."/>
            <person name="Hauser L.J."/>
            <person name="Hemp J."/>
            <person name="Huegler M."/>
            <person name="Land M."/>
            <person name="Lapidus A."/>
            <person name="Larimer F.W."/>
            <person name="Lucas S."/>
            <person name="Malfatti S.A."/>
            <person name="Meyer F."/>
            <person name="Paulsen I.T."/>
            <person name="Ren Q."/>
            <person name="Simon J."/>
            <person name="Bailey K."/>
            <person name="Diaz E."/>
            <person name="Fitzpatrick K.A."/>
            <person name="Glover B."/>
            <person name="Gwatney N."/>
            <person name="Korajkic A."/>
            <person name="Long A."/>
            <person name="Mobberley J.M."/>
            <person name="Pantry S.N."/>
            <person name="Pazder G."/>
            <person name="Peterson S."/>
            <person name="Quintanilla J.D."/>
            <person name="Sprinkle R."/>
            <person name="Stephens J."/>
            <person name="Thomas P."/>
            <person name="Vaughn R."/>
            <person name="Weber M.J."/>
            <person name="Wooten L.L."/>
        </authorList>
    </citation>
    <scope>NUCLEOTIDE SEQUENCE [LARGE SCALE GENOMIC DNA]</scope>
    <source>
        <strain>ATCC 33889 / DSM 1251</strain>
    </source>
</reference>
<sequence length="146" mass="15435">MEINREDFEESIVNIGRVTKVVKGGRRFRFTALVVVGNKKGTIGFGAGKAKEVPDAIKKAVDNAFKNLSKVSIKGTTIAHDIEHKYNASRILLKPASEGTGVIAGGAVRPVLELAGIKDVLTKSIGSNNPGTLVRATVEALGRLKG</sequence>